<gene>
    <name evidence="1" type="primary">greA</name>
    <name type="ordered locus">XfasM23_0394</name>
</gene>
<feature type="chain" id="PRO_1000094209" description="Transcription elongation factor GreA">
    <location>
        <begin position="1"/>
        <end position="158"/>
    </location>
</feature>
<feature type="coiled-coil region" evidence="1">
    <location>
        <begin position="45"/>
        <end position="72"/>
    </location>
</feature>
<keyword id="KW-0175">Coiled coil</keyword>
<keyword id="KW-0238">DNA-binding</keyword>
<keyword id="KW-0804">Transcription</keyword>
<keyword id="KW-0805">Transcription regulation</keyword>
<protein>
    <recommendedName>
        <fullName evidence="1">Transcription elongation factor GreA</fullName>
    </recommendedName>
    <alternativeName>
        <fullName evidence="1">Transcript cleavage factor GreA</fullName>
    </alternativeName>
</protein>
<organism>
    <name type="scientific">Xylella fastidiosa (strain M23)</name>
    <dbReference type="NCBI Taxonomy" id="405441"/>
    <lineage>
        <taxon>Bacteria</taxon>
        <taxon>Pseudomonadati</taxon>
        <taxon>Pseudomonadota</taxon>
        <taxon>Gammaproteobacteria</taxon>
        <taxon>Lysobacterales</taxon>
        <taxon>Lysobacteraceae</taxon>
        <taxon>Xylella</taxon>
    </lineage>
</organism>
<name>GREA_XYLF2</name>
<evidence type="ECO:0000255" key="1">
    <source>
        <dbReference type="HAMAP-Rule" id="MF_00105"/>
    </source>
</evidence>
<dbReference type="EMBL" id="CP001011">
    <property type="protein sequence ID" value="ACB91842.1"/>
    <property type="molecule type" value="Genomic_DNA"/>
</dbReference>
<dbReference type="SMR" id="B2I844"/>
<dbReference type="KEGG" id="xfn:XfasM23_0394"/>
<dbReference type="HOGENOM" id="CLU_101379_2_0_6"/>
<dbReference type="Proteomes" id="UP000001698">
    <property type="component" value="Chromosome"/>
</dbReference>
<dbReference type="GO" id="GO:0003677">
    <property type="term" value="F:DNA binding"/>
    <property type="evidence" value="ECO:0007669"/>
    <property type="project" value="UniProtKB-UniRule"/>
</dbReference>
<dbReference type="GO" id="GO:0070063">
    <property type="term" value="F:RNA polymerase binding"/>
    <property type="evidence" value="ECO:0007669"/>
    <property type="project" value="InterPro"/>
</dbReference>
<dbReference type="GO" id="GO:0006354">
    <property type="term" value="P:DNA-templated transcription elongation"/>
    <property type="evidence" value="ECO:0007669"/>
    <property type="project" value="TreeGrafter"/>
</dbReference>
<dbReference type="GO" id="GO:0032784">
    <property type="term" value="P:regulation of DNA-templated transcription elongation"/>
    <property type="evidence" value="ECO:0007669"/>
    <property type="project" value="UniProtKB-UniRule"/>
</dbReference>
<dbReference type="FunFam" id="1.10.287.180:FF:000001">
    <property type="entry name" value="Transcription elongation factor GreA"/>
    <property type="match status" value="1"/>
</dbReference>
<dbReference type="FunFam" id="3.10.50.30:FF:000001">
    <property type="entry name" value="Transcription elongation factor GreA"/>
    <property type="match status" value="1"/>
</dbReference>
<dbReference type="Gene3D" id="3.10.50.30">
    <property type="entry name" value="Transcription elongation factor, GreA/GreB, C-terminal domain"/>
    <property type="match status" value="1"/>
</dbReference>
<dbReference type="Gene3D" id="1.10.287.180">
    <property type="entry name" value="Transcription elongation factor, GreA/GreB, N-terminal domain"/>
    <property type="match status" value="1"/>
</dbReference>
<dbReference type="HAMAP" id="MF_00105">
    <property type="entry name" value="GreA_GreB"/>
    <property type="match status" value="1"/>
</dbReference>
<dbReference type="InterPro" id="IPR036953">
    <property type="entry name" value="GreA/GreB_C_sf"/>
</dbReference>
<dbReference type="InterPro" id="IPR018151">
    <property type="entry name" value="TF_GreA/GreB_CS"/>
</dbReference>
<dbReference type="InterPro" id="IPR006359">
    <property type="entry name" value="Tscrpt_elong_fac_GreA"/>
</dbReference>
<dbReference type="InterPro" id="IPR028624">
    <property type="entry name" value="Tscrpt_elong_fac_GreA/B"/>
</dbReference>
<dbReference type="InterPro" id="IPR001437">
    <property type="entry name" value="Tscrpt_elong_fac_GreA/B_C"/>
</dbReference>
<dbReference type="InterPro" id="IPR023459">
    <property type="entry name" value="Tscrpt_elong_fac_GreA/B_fam"/>
</dbReference>
<dbReference type="InterPro" id="IPR022691">
    <property type="entry name" value="Tscrpt_elong_fac_GreA/B_N"/>
</dbReference>
<dbReference type="InterPro" id="IPR036805">
    <property type="entry name" value="Tscrpt_elong_fac_GreA/B_N_sf"/>
</dbReference>
<dbReference type="NCBIfam" id="TIGR01462">
    <property type="entry name" value="greA"/>
    <property type="match status" value="1"/>
</dbReference>
<dbReference type="NCBIfam" id="NF001261">
    <property type="entry name" value="PRK00226.1-2"/>
    <property type="match status" value="1"/>
</dbReference>
<dbReference type="NCBIfam" id="NF001263">
    <property type="entry name" value="PRK00226.1-4"/>
    <property type="match status" value="1"/>
</dbReference>
<dbReference type="NCBIfam" id="NF001264">
    <property type="entry name" value="PRK00226.1-5"/>
    <property type="match status" value="1"/>
</dbReference>
<dbReference type="PANTHER" id="PTHR30437">
    <property type="entry name" value="TRANSCRIPTION ELONGATION FACTOR GREA"/>
    <property type="match status" value="1"/>
</dbReference>
<dbReference type="PANTHER" id="PTHR30437:SF4">
    <property type="entry name" value="TRANSCRIPTION ELONGATION FACTOR GREA"/>
    <property type="match status" value="1"/>
</dbReference>
<dbReference type="Pfam" id="PF01272">
    <property type="entry name" value="GreA_GreB"/>
    <property type="match status" value="1"/>
</dbReference>
<dbReference type="Pfam" id="PF03449">
    <property type="entry name" value="GreA_GreB_N"/>
    <property type="match status" value="1"/>
</dbReference>
<dbReference type="PIRSF" id="PIRSF006092">
    <property type="entry name" value="GreA_GreB"/>
    <property type="match status" value="1"/>
</dbReference>
<dbReference type="SUPFAM" id="SSF54534">
    <property type="entry name" value="FKBP-like"/>
    <property type="match status" value="1"/>
</dbReference>
<dbReference type="SUPFAM" id="SSF46557">
    <property type="entry name" value="GreA transcript cleavage protein, N-terminal domain"/>
    <property type="match status" value="1"/>
</dbReference>
<dbReference type="PROSITE" id="PS00829">
    <property type="entry name" value="GREAB_1"/>
    <property type="match status" value="1"/>
</dbReference>
<sequence length="158" mass="17344">MRAPMTLKGVRRLRDELEHLKSVKRPEIINAIAEARAHGDLKENAEYHAAREQQSFIEGRIKQLEGELSHAEVIDVAKLNAGTKIVFGATVTLADLGTDEESRYQIVGDLEADIKQGLVAISSPVARALIGKQEGDTIVIEAPAGRREYEVVAVEYIS</sequence>
<reference key="1">
    <citation type="journal article" date="2010" name="J. Bacteriol.">
        <title>Whole genome sequences of two Xylella fastidiosa strains (M12 and M23) causing almond leaf scorch disease in California.</title>
        <authorList>
            <person name="Chen J."/>
            <person name="Xie G."/>
            <person name="Han S."/>
            <person name="Chertkov O."/>
            <person name="Sims D."/>
            <person name="Civerolo E.L."/>
        </authorList>
    </citation>
    <scope>NUCLEOTIDE SEQUENCE [LARGE SCALE GENOMIC DNA]</scope>
    <source>
        <strain>M23</strain>
    </source>
</reference>
<proteinExistence type="inferred from homology"/>
<accession>B2I844</accession>
<comment type="function">
    <text evidence="1">Necessary for efficient RNA polymerase transcription elongation past template-encoded arresting sites. The arresting sites in DNA have the property of trapping a certain fraction of elongating RNA polymerases that pass through, resulting in locked ternary complexes. Cleavage of the nascent transcript by cleavage factors such as GreA or GreB allows the resumption of elongation from the new 3'terminus. GreA releases sequences of 2 to 3 nucleotides.</text>
</comment>
<comment type="similarity">
    <text evidence="1">Belongs to the GreA/GreB family.</text>
</comment>